<dbReference type="EC" id="4.2.1.33" evidence="1"/>
<dbReference type="EMBL" id="CP001393">
    <property type="protein sequence ID" value="ACM61176.1"/>
    <property type="molecule type" value="Genomic_DNA"/>
</dbReference>
<dbReference type="RefSeq" id="WP_015908449.1">
    <property type="nucleotide sequence ID" value="NC_012034.1"/>
</dbReference>
<dbReference type="SMR" id="B9MLV3"/>
<dbReference type="STRING" id="521460.Athe_2100"/>
<dbReference type="GeneID" id="31773448"/>
<dbReference type="KEGG" id="ate:Athe_2100"/>
<dbReference type="eggNOG" id="COG0066">
    <property type="taxonomic scope" value="Bacteria"/>
</dbReference>
<dbReference type="HOGENOM" id="CLU_081378_1_1_9"/>
<dbReference type="UniPathway" id="UPA00048">
    <property type="reaction ID" value="UER00071"/>
</dbReference>
<dbReference type="Proteomes" id="UP000007723">
    <property type="component" value="Chromosome"/>
</dbReference>
<dbReference type="GO" id="GO:0003861">
    <property type="term" value="F:3-isopropylmalate dehydratase activity"/>
    <property type="evidence" value="ECO:0007669"/>
    <property type="project" value="UniProtKB-UniRule"/>
</dbReference>
<dbReference type="GO" id="GO:0009098">
    <property type="term" value="P:L-leucine biosynthetic process"/>
    <property type="evidence" value="ECO:0007669"/>
    <property type="project" value="UniProtKB-UniRule"/>
</dbReference>
<dbReference type="CDD" id="cd01577">
    <property type="entry name" value="IPMI_Swivel"/>
    <property type="match status" value="1"/>
</dbReference>
<dbReference type="FunFam" id="3.20.19.10:FF:000007">
    <property type="entry name" value="Isopropylmalate/citramalate isomerase small subunit"/>
    <property type="match status" value="1"/>
</dbReference>
<dbReference type="Gene3D" id="3.20.19.10">
    <property type="entry name" value="Aconitase, domain 4"/>
    <property type="match status" value="1"/>
</dbReference>
<dbReference type="HAMAP" id="MF_01032">
    <property type="entry name" value="LeuD_type2"/>
    <property type="match status" value="1"/>
</dbReference>
<dbReference type="InterPro" id="IPR015928">
    <property type="entry name" value="Aconitase/3IPM_dehydase_swvl"/>
</dbReference>
<dbReference type="InterPro" id="IPR000573">
    <property type="entry name" value="AconitaseA/IPMdHydase_ssu_swvl"/>
</dbReference>
<dbReference type="InterPro" id="IPR033940">
    <property type="entry name" value="IPMI_Swivel"/>
</dbReference>
<dbReference type="InterPro" id="IPR050075">
    <property type="entry name" value="LeuD"/>
</dbReference>
<dbReference type="InterPro" id="IPR011824">
    <property type="entry name" value="LeuD/DmdB_bac"/>
</dbReference>
<dbReference type="InterPro" id="IPR011827">
    <property type="entry name" value="LeuD_type2/HacB/DmdB"/>
</dbReference>
<dbReference type="NCBIfam" id="TIGR02084">
    <property type="entry name" value="leud"/>
    <property type="match status" value="1"/>
</dbReference>
<dbReference type="NCBIfam" id="TIGR02087">
    <property type="entry name" value="LEUD_arch"/>
    <property type="match status" value="1"/>
</dbReference>
<dbReference type="PANTHER" id="PTHR43345:SF2">
    <property type="entry name" value="3-ISOPROPYLMALATE DEHYDRATASE SMALL SUBUNIT 1"/>
    <property type="match status" value="1"/>
</dbReference>
<dbReference type="PANTHER" id="PTHR43345">
    <property type="entry name" value="3-ISOPROPYLMALATE DEHYDRATASE SMALL SUBUNIT 2-RELATED-RELATED"/>
    <property type="match status" value="1"/>
</dbReference>
<dbReference type="Pfam" id="PF00694">
    <property type="entry name" value="Aconitase_C"/>
    <property type="match status" value="1"/>
</dbReference>
<dbReference type="SUPFAM" id="SSF52016">
    <property type="entry name" value="LeuD/IlvD-like"/>
    <property type="match status" value="1"/>
</dbReference>
<gene>
    <name evidence="1" type="primary">leuD</name>
    <name type="ordered locus">Athe_2100</name>
</gene>
<proteinExistence type="inferred from homology"/>
<reference key="1">
    <citation type="submission" date="2009-01" db="EMBL/GenBank/DDBJ databases">
        <title>Complete sequence of chromosome of Caldicellulosiruptor becscii DSM 6725.</title>
        <authorList>
            <person name="Lucas S."/>
            <person name="Copeland A."/>
            <person name="Lapidus A."/>
            <person name="Glavina del Rio T."/>
            <person name="Tice H."/>
            <person name="Bruce D."/>
            <person name="Goodwin L."/>
            <person name="Pitluck S."/>
            <person name="Sims D."/>
            <person name="Meincke L."/>
            <person name="Brettin T."/>
            <person name="Detter J.C."/>
            <person name="Han C."/>
            <person name="Larimer F."/>
            <person name="Land M."/>
            <person name="Hauser L."/>
            <person name="Kyrpides N."/>
            <person name="Ovchinnikova G."/>
            <person name="Kataeva I."/>
            <person name="Adams M.W.W."/>
        </authorList>
    </citation>
    <scope>NUCLEOTIDE SEQUENCE [LARGE SCALE GENOMIC DNA]</scope>
    <source>
        <strain>ATCC BAA-1888 / DSM 6725 / KCTC 15123 / Z-1320</strain>
    </source>
</reference>
<feature type="chain" id="PRO_1000213359" description="3-isopropylmalate dehydratase small subunit">
    <location>
        <begin position="1"/>
        <end position="166"/>
    </location>
</feature>
<accession>B9MLV3</accession>
<comment type="function">
    <text evidence="1">Catalyzes the isomerization between 2-isopropylmalate and 3-isopropylmalate, via the formation of 2-isopropylmaleate.</text>
</comment>
<comment type="catalytic activity">
    <reaction evidence="1">
        <text>(2R,3S)-3-isopropylmalate = (2S)-2-isopropylmalate</text>
        <dbReference type="Rhea" id="RHEA:32287"/>
        <dbReference type="ChEBI" id="CHEBI:1178"/>
        <dbReference type="ChEBI" id="CHEBI:35121"/>
        <dbReference type="EC" id="4.2.1.33"/>
    </reaction>
</comment>
<comment type="pathway">
    <text evidence="1">Amino-acid biosynthesis; L-leucine biosynthesis; L-leucine from 3-methyl-2-oxobutanoate: step 2/4.</text>
</comment>
<comment type="subunit">
    <text evidence="1">Heterodimer of LeuC and LeuD.</text>
</comment>
<comment type="similarity">
    <text evidence="1">Belongs to the LeuD family. LeuD type 2 subfamily.</text>
</comment>
<sequence>MIFKGKAHKYYDNIDTDVIIPARYLNTSDPNELAKHCLEDLDKEFVNKVQKGDILVAGKNFGCGSSREHAPIAIKACGVSCVIAKSFARIFYRNAINIGLPIVECEEAVDGIEAGDEVEVDLVNGIIKNLTKGKEFKAKPFPEFMQNIMKAGGLIEFVKGELKKDA</sequence>
<protein>
    <recommendedName>
        <fullName evidence="1">3-isopropylmalate dehydratase small subunit</fullName>
        <ecNumber evidence="1">4.2.1.33</ecNumber>
    </recommendedName>
    <alternativeName>
        <fullName evidence="1">Alpha-IPM isomerase</fullName>
        <shortName evidence="1">IPMI</shortName>
    </alternativeName>
    <alternativeName>
        <fullName evidence="1">Isopropylmalate isomerase</fullName>
    </alternativeName>
</protein>
<keyword id="KW-0028">Amino-acid biosynthesis</keyword>
<keyword id="KW-0100">Branched-chain amino acid biosynthesis</keyword>
<keyword id="KW-0432">Leucine biosynthesis</keyword>
<keyword id="KW-0456">Lyase</keyword>
<evidence type="ECO:0000255" key="1">
    <source>
        <dbReference type="HAMAP-Rule" id="MF_01032"/>
    </source>
</evidence>
<organism>
    <name type="scientific">Caldicellulosiruptor bescii (strain ATCC BAA-1888 / DSM 6725 / KCTC 15123 / Z-1320)</name>
    <name type="common">Anaerocellum thermophilum</name>
    <dbReference type="NCBI Taxonomy" id="521460"/>
    <lineage>
        <taxon>Bacteria</taxon>
        <taxon>Bacillati</taxon>
        <taxon>Bacillota</taxon>
        <taxon>Bacillota incertae sedis</taxon>
        <taxon>Caldicellulosiruptorales</taxon>
        <taxon>Caldicellulosiruptoraceae</taxon>
        <taxon>Caldicellulosiruptor</taxon>
    </lineage>
</organism>
<name>LEUD_CALBD</name>